<evidence type="ECO:0000255" key="1">
    <source>
        <dbReference type="HAMAP-Rule" id="MF_00033"/>
    </source>
</evidence>
<proteinExistence type="inferred from homology"/>
<reference key="1">
    <citation type="journal article" date="2005" name="J. Bacteriol.">
        <title>Genomic sequence of an otitis media isolate of nontypeable Haemophilus influenzae: comparative study with H. influenzae serotype d, strain KW20.</title>
        <authorList>
            <person name="Harrison A."/>
            <person name="Dyer D.W."/>
            <person name="Gillaspy A."/>
            <person name="Ray W.C."/>
            <person name="Mungur R."/>
            <person name="Carson M.B."/>
            <person name="Zhong H."/>
            <person name="Gipson J."/>
            <person name="Gipson M."/>
            <person name="Johnson L.S."/>
            <person name="Lewis L."/>
            <person name="Bakaletz L.O."/>
            <person name="Munson R.S. Jr."/>
        </authorList>
    </citation>
    <scope>NUCLEOTIDE SEQUENCE [LARGE SCALE GENOMIC DNA]</scope>
    <source>
        <strain>86-028NP</strain>
    </source>
</reference>
<keyword id="KW-0131">Cell cycle</keyword>
<keyword id="KW-0132">Cell division</keyword>
<keyword id="KW-0997">Cell inner membrane</keyword>
<keyword id="KW-1003">Cell membrane</keyword>
<keyword id="KW-0133">Cell shape</keyword>
<keyword id="KW-0961">Cell wall biogenesis/degradation</keyword>
<keyword id="KW-0328">Glycosyltransferase</keyword>
<keyword id="KW-0472">Membrane</keyword>
<keyword id="KW-0573">Peptidoglycan synthesis</keyword>
<keyword id="KW-0808">Transferase</keyword>
<name>MURG_HAEI8</name>
<comment type="function">
    <text evidence="1">Cell wall formation. Catalyzes the transfer of a GlcNAc subunit on undecaprenyl-pyrophosphoryl-MurNAc-pentapeptide (lipid intermediate I) to form undecaprenyl-pyrophosphoryl-MurNAc-(pentapeptide)GlcNAc (lipid intermediate II).</text>
</comment>
<comment type="catalytic activity">
    <reaction evidence="1">
        <text>di-trans,octa-cis-undecaprenyl diphospho-N-acetyl-alpha-D-muramoyl-L-alanyl-D-glutamyl-meso-2,6-diaminopimeloyl-D-alanyl-D-alanine + UDP-N-acetyl-alpha-D-glucosamine = di-trans,octa-cis-undecaprenyl diphospho-[N-acetyl-alpha-D-glucosaminyl-(1-&gt;4)]-N-acetyl-alpha-D-muramoyl-L-alanyl-D-glutamyl-meso-2,6-diaminopimeloyl-D-alanyl-D-alanine + UDP + H(+)</text>
        <dbReference type="Rhea" id="RHEA:31227"/>
        <dbReference type="ChEBI" id="CHEBI:15378"/>
        <dbReference type="ChEBI" id="CHEBI:57705"/>
        <dbReference type="ChEBI" id="CHEBI:58223"/>
        <dbReference type="ChEBI" id="CHEBI:61387"/>
        <dbReference type="ChEBI" id="CHEBI:61388"/>
        <dbReference type="EC" id="2.4.1.227"/>
    </reaction>
</comment>
<comment type="pathway">
    <text evidence="1">Cell wall biogenesis; peptidoglycan biosynthesis.</text>
</comment>
<comment type="subcellular location">
    <subcellularLocation>
        <location evidence="1">Cell inner membrane</location>
        <topology evidence="1">Peripheral membrane protein</topology>
        <orientation evidence="1">Cytoplasmic side</orientation>
    </subcellularLocation>
</comment>
<comment type="similarity">
    <text evidence="1">Belongs to the glycosyltransferase 28 family. MurG subfamily.</text>
</comment>
<protein>
    <recommendedName>
        <fullName evidence="1">UDP-N-acetylglucosamine--N-acetylmuramyl-(pentapeptide) pyrophosphoryl-undecaprenol N-acetylglucosamine transferase</fullName>
        <ecNumber evidence="1">2.4.1.227</ecNumber>
    </recommendedName>
    <alternativeName>
        <fullName evidence="1">Undecaprenyl-PP-MurNAc-pentapeptide-UDPGlcNAc GlcNAc transferase</fullName>
    </alternativeName>
</protein>
<accession>Q4QLF8</accession>
<dbReference type="EC" id="2.4.1.227" evidence="1"/>
<dbReference type="EMBL" id="CP000057">
    <property type="protein sequence ID" value="AAX88139.1"/>
    <property type="molecule type" value="Genomic_DNA"/>
</dbReference>
<dbReference type="RefSeq" id="WP_005690682.1">
    <property type="nucleotide sequence ID" value="NC_007146.2"/>
</dbReference>
<dbReference type="SMR" id="Q4QLF8"/>
<dbReference type="CAZy" id="GT28">
    <property type="family name" value="Glycosyltransferase Family 28"/>
</dbReference>
<dbReference type="GeneID" id="93220144"/>
<dbReference type="KEGG" id="hit:NTHI1305"/>
<dbReference type="HOGENOM" id="CLU_037404_2_0_6"/>
<dbReference type="UniPathway" id="UPA00219"/>
<dbReference type="Proteomes" id="UP000002525">
    <property type="component" value="Chromosome"/>
</dbReference>
<dbReference type="GO" id="GO:0005886">
    <property type="term" value="C:plasma membrane"/>
    <property type="evidence" value="ECO:0007669"/>
    <property type="project" value="UniProtKB-SubCell"/>
</dbReference>
<dbReference type="GO" id="GO:0051991">
    <property type="term" value="F:UDP-N-acetyl-D-glucosamine:N-acetylmuramoyl-L-alanyl-D-glutamyl-meso-2,6-diaminopimelyl-D-alanyl-D-alanine-diphosphoundecaprenol 4-beta-N-acetylglucosaminlytransferase activity"/>
    <property type="evidence" value="ECO:0007669"/>
    <property type="project" value="RHEA"/>
</dbReference>
<dbReference type="GO" id="GO:0050511">
    <property type="term" value="F:undecaprenyldiphospho-muramoylpentapeptide beta-N-acetylglucosaminyltransferase activity"/>
    <property type="evidence" value="ECO:0007669"/>
    <property type="project" value="UniProtKB-UniRule"/>
</dbReference>
<dbReference type="GO" id="GO:0005975">
    <property type="term" value="P:carbohydrate metabolic process"/>
    <property type="evidence" value="ECO:0007669"/>
    <property type="project" value="InterPro"/>
</dbReference>
<dbReference type="GO" id="GO:0051301">
    <property type="term" value="P:cell division"/>
    <property type="evidence" value="ECO:0007669"/>
    <property type="project" value="UniProtKB-KW"/>
</dbReference>
<dbReference type="GO" id="GO:0071555">
    <property type="term" value="P:cell wall organization"/>
    <property type="evidence" value="ECO:0007669"/>
    <property type="project" value="UniProtKB-KW"/>
</dbReference>
<dbReference type="GO" id="GO:0030259">
    <property type="term" value="P:lipid glycosylation"/>
    <property type="evidence" value="ECO:0007669"/>
    <property type="project" value="UniProtKB-UniRule"/>
</dbReference>
<dbReference type="GO" id="GO:0009252">
    <property type="term" value="P:peptidoglycan biosynthetic process"/>
    <property type="evidence" value="ECO:0007669"/>
    <property type="project" value="UniProtKB-UniRule"/>
</dbReference>
<dbReference type="GO" id="GO:0008360">
    <property type="term" value="P:regulation of cell shape"/>
    <property type="evidence" value="ECO:0007669"/>
    <property type="project" value="UniProtKB-KW"/>
</dbReference>
<dbReference type="CDD" id="cd03785">
    <property type="entry name" value="GT28_MurG"/>
    <property type="match status" value="1"/>
</dbReference>
<dbReference type="Gene3D" id="3.40.50.2000">
    <property type="entry name" value="Glycogen Phosphorylase B"/>
    <property type="match status" value="2"/>
</dbReference>
<dbReference type="HAMAP" id="MF_00033">
    <property type="entry name" value="MurG"/>
    <property type="match status" value="1"/>
</dbReference>
<dbReference type="InterPro" id="IPR006009">
    <property type="entry name" value="GlcNAc_MurG"/>
</dbReference>
<dbReference type="InterPro" id="IPR007235">
    <property type="entry name" value="Glyco_trans_28_C"/>
</dbReference>
<dbReference type="InterPro" id="IPR004276">
    <property type="entry name" value="GlycoTrans_28_N"/>
</dbReference>
<dbReference type="NCBIfam" id="TIGR01133">
    <property type="entry name" value="murG"/>
    <property type="match status" value="1"/>
</dbReference>
<dbReference type="PANTHER" id="PTHR21015:SF22">
    <property type="entry name" value="GLYCOSYLTRANSFERASE"/>
    <property type="match status" value="1"/>
</dbReference>
<dbReference type="PANTHER" id="PTHR21015">
    <property type="entry name" value="UDP-N-ACETYLGLUCOSAMINE--N-ACETYLMURAMYL-(PENTAPEPTIDE) PYROPHOSPHORYL-UNDECAPRENOL N-ACETYLGLUCOSAMINE TRANSFERASE 1"/>
    <property type="match status" value="1"/>
</dbReference>
<dbReference type="Pfam" id="PF04101">
    <property type="entry name" value="Glyco_tran_28_C"/>
    <property type="match status" value="1"/>
</dbReference>
<dbReference type="Pfam" id="PF03033">
    <property type="entry name" value="Glyco_transf_28"/>
    <property type="match status" value="1"/>
</dbReference>
<dbReference type="SUPFAM" id="SSF53756">
    <property type="entry name" value="UDP-Glycosyltransferase/glycogen phosphorylase"/>
    <property type="match status" value="1"/>
</dbReference>
<sequence length="351" mass="38377">MKNKKLLVMAGGTGGHVFPAIAVAQTLQKQEWDICWLGTKDRMEAQLVPKYGIPIRFIQISGLRGKGIKALLNAPFAIFRAVLQAKKIIQEEKPDAVLGMGGYVSGPAGVAAKLCGVPIILHEQNAIAGLTNKLLGKIATCVLQAFPTAFPHAEVVGNPVREDLFEMPNPDIRFSDREEKLRVLVVGGSQGARVLNHTLPKVVAQLADKLELRHQVGKGAVEEVSQLYGENLEQVKITEFIDNMAEAYAWADVVICRSGALTVCEIAAVGVAAIFVPFQHKDRQQYLNAKYLSDVDAAKIIEQADLTPEMLVNYLKNLTRENLLQMALKAKTMSMPNAAQRVAEVIKQYSN</sequence>
<gene>
    <name evidence="1" type="primary">murG</name>
    <name type="ordered locus">NTHI1305</name>
</gene>
<feature type="chain" id="PRO_0000109178" description="UDP-N-acetylglucosamine--N-acetylmuramyl-(pentapeptide) pyrophosphoryl-undecaprenol N-acetylglucosamine transferase">
    <location>
        <begin position="1"/>
        <end position="351"/>
    </location>
</feature>
<feature type="binding site" evidence="1">
    <location>
        <begin position="13"/>
        <end position="15"/>
    </location>
    <ligand>
        <name>UDP-N-acetyl-alpha-D-glucosamine</name>
        <dbReference type="ChEBI" id="CHEBI:57705"/>
    </ligand>
</feature>
<feature type="binding site" evidence="1">
    <location>
        <position position="125"/>
    </location>
    <ligand>
        <name>UDP-N-acetyl-alpha-D-glucosamine</name>
        <dbReference type="ChEBI" id="CHEBI:57705"/>
    </ligand>
</feature>
<feature type="binding site" evidence="1">
    <location>
        <position position="161"/>
    </location>
    <ligand>
        <name>UDP-N-acetyl-alpha-D-glucosamine</name>
        <dbReference type="ChEBI" id="CHEBI:57705"/>
    </ligand>
</feature>
<feature type="binding site" evidence="1">
    <location>
        <position position="189"/>
    </location>
    <ligand>
        <name>UDP-N-acetyl-alpha-D-glucosamine</name>
        <dbReference type="ChEBI" id="CHEBI:57705"/>
    </ligand>
</feature>
<feature type="binding site" evidence="1">
    <location>
        <position position="241"/>
    </location>
    <ligand>
        <name>UDP-N-acetyl-alpha-D-glucosamine</name>
        <dbReference type="ChEBI" id="CHEBI:57705"/>
    </ligand>
</feature>
<feature type="binding site" evidence="1">
    <location>
        <begin position="260"/>
        <end position="265"/>
    </location>
    <ligand>
        <name>UDP-N-acetyl-alpha-D-glucosamine</name>
        <dbReference type="ChEBI" id="CHEBI:57705"/>
    </ligand>
</feature>
<feature type="binding site" evidence="1">
    <location>
        <position position="285"/>
    </location>
    <ligand>
        <name>UDP-N-acetyl-alpha-D-glucosamine</name>
        <dbReference type="ChEBI" id="CHEBI:57705"/>
    </ligand>
</feature>
<organism>
    <name type="scientific">Haemophilus influenzae (strain 86-028NP)</name>
    <dbReference type="NCBI Taxonomy" id="281310"/>
    <lineage>
        <taxon>Bacteria</taxon>
        <taxon>Pseudomonadati</taxon>
        <taxon>Pseudomonadota</taxon>
        <taxon>Gammaproteobacteria</taxon>
        <taxon>Pasteurellales</taxon>
        <taxon>Pasteurellaceae</taxon>
        <taxon>Haemophilus</taxon>
    </lineage>
</organism>